<organism>
    <name type="scientific">Cupriavidus pinatubonensis (strain JMP 134 / LMG 1197)</name>
    <name type="common">Cupriavidus necator (strain JMP 134)</name>
    <dbReference type="NCBI Taxonomy" id="264198"/>
    <lineage>
        <taxon>Bacteria</taxon>
        <taxon>Pseudomonadati</taxon>
        <taxon>Pseudomonadota</taxon>
        <taxon>Betaproteobacteria</taxon>
        <taxon>Burkholderiales</taxon>
        <taxon>Burkholderiaceae</taxon>
        <taxon>Cupriavidus</taxon>
    </lineage>
</organism>
<feature type="chain" id="PRO_0000406759" description="Flagellar transcriptional regulator FlhC">
    <location>
        <begin position="1"/>
        <end position="210"/>
    </location>
</feature>
<feature type="binding site" evidence="1">
    <location>
        <position position="144"/>
    </location>
    <ligand>
        <name>Zn(2+)</name>
        <dbReference type="ChEBI" id="CHEBI:29105"/>
    </ligand>
</feature>
<feature type="binding site" evidence="1">
    <location>
        <position position="147"/>
    </location>
    <ligand>
        <name>Zn(2+)</name>
        <dbReference type="ChEBI" id="CHEBI:29105"/>
    </ligand>
</feature>
<feature type="binding site" evidence="1">
    <location>
        <position position="164"/>
    </location>
    <ligand>
        <name>Zn(2+)</name>
        <dbReference type="ChEBI" id="CHEBI:29105"/>
    </ligand>
</feature>
<feature type="binding site" evidence="1">
    <location>
        <position position="167"/>
    </location>
    <ligand>
        <name>Zn(2+)</name>
        <dbReference type="ChEBI" id="CHEBI:29105"/>
    </ligand>
</feature>
<name>FLHC_CUPPJ</name>
<accession>Q46TH1</accession>
<keyword id="KW-0010">Activator</keyword>
<keyword id="KW-1005">Bacterial flagellum biogenesis</keyword>
<keyword id="KW-0963">Cytoplasm</keyword>
<keyword id="KW-0238">DNA-binding</keyword>
<keyword id="KW-0479">Metal-binding</keyword>
<keyword id="KW-0804">Transcription</keyword>
<keyword id="KW-0805">Transcription regulation</keyword>
<keyword id="KW-0862">Zinc</keyword>
<gene>
    <name evidence="1" type="primary">flhC</name>
    <name type="ordered locus">Reut_B4210</name>
</gene>
<comment type="function">
    <text evidence="1">Functions in complex with FlhD as a master transcriptional regulator that regulates transcription of several flagellar and non-flagellar operons by binding to their promoter region. Activates expression of class 2 flagellar genes, including fliA, which is a flagellum-specific sigma factor that turns on the class 3 genes. Also regulates genes whose products function in a variety of physiological pathways.</text>
</comment>
<comment type="cofactor">
    <cofactor evidence="1">
        <name>Zn(2+)</name>
        <dbReference type="ChEBI" id="CHEBI:29105"/>
    </cofactor>
    <text evidence="1">Binds 1 zinc ion per subunit.</text>
</comment>
<comment type="subunit">
    <text evidence="1">Heterohexamer composed of two FlhC and four FlhD subunits. Each FlhC binds a FlhD dimer, forming a heterotrimer, and a hexamer assembles by dimerization of two heterotrimers.</text>
</comment>
<comment type="subcellular location">
    <subcellularLocation>
        <location evidence="1">Cytoplasm</location>
    </subcellularLocation>
</comment>
<comment type="similarity">
    <text evidence="1">Belongs to the FlhC family.</text>
</comment>
<proteinExistence type="inferred from homology"/>
<evidence type="ECO:0000255" key="1">
    <source>
        <dbReference type="HAMAP-Rule" id="MF_01891"/>
    </source>
</evidence>
<protein>
    <recommendedName>
        <fullName evidence="1">Flagellar transcriptional regulator FlhC</fullName>
    </recommendedName>
</protein>
<sequence>MKTTAQTAPARSALQDASDTQLAIELIGLGARPQVVEAEVTLSRSRVYRLYRELTGGSPPKGMLPFSADWFVTWRPNAHASYLLSVHEYMQQRAGLPGIRAVLNSYRVYAEHMKANNEECLISFTRFWTLVRFCEGGLLQLSTCPCCGGRFVTHAHEPLASFICTLCQPPSRVRRSVRRETPHATANAPAAVLGNRPPVAMPGFGMVPAL</sequence>
<dbReference type="EMBL" id="CP000091">
    <property type="protein sequence ID" value="AAZ63563.1"/>
    <property type="molecule type" value="Genomic_DNA"/>
</dbReference>
<dbReference type="SMR" id="Q46TH1"/>
<dbReference type="STRING" id="264198.Reut_B4210"/>
<dbReference type="KEGG" id="reu:Reut_B4210"/>
<dbReference type="eggNOG" id="ENOG502Z927">
    <property type="taxonomic scope" value="Bacteria"/>
</dbReference>
<dbReference type="HOGENOM" id="CLU_122824_0_0_4"/>
<dbReference type="OrthoDB" id="5570801at2"/>
<dbReference type="GO" id="GO:0005737">
    <property type="term" value="C:cytoplasm"/>
    <property type="evidence" value="ECO:0007669"/>
    <property type="project" value="UniProtKB-SubCell"/>
</dbReference>
<dbReference type="GO" id="GO:0003677">
    <property type="term" value="F:DNA binding"/>
    <property type="evidence" value="ECO:0007669"/>
    <property type="project" value="UniProtKB-UniRule"/>
</dbReference>
<dbReference type="GO" id="GO:0008270">
    <property type="term" value="F:zinc ion binding"/>
    <property type="evidence" value="ECO:0007669"/>
    <property type="project" value="UniProtKB-UniRule"/>
</dbReference>
<dbReference type="GO" id="GO:0044781">
    <property type="term" value="P:bacterial-type flagellum organization"/>
    <property type="evidence" value="ECO:0007669"/>
    <property type="project" value="UniProtKB-KW"/>
</dbReference>
<dbReference type="GO" id="GO:0045893">
    <property type="term" value="P:positive regulation of DNA-templated transcription"/>
    <property type="evidence" value="ECO:0007669"/>
    <property type="project" value="InterPro"/>
</dbReference>
<dbReference type="GO" id="GO:1902208">
    <property type="term" value="P:regulation of bacterial-type flagellum assembly"/>
    <property type="evidence" value="ECO:0007669"/>
    <property type="project" value="UniProtKB-UniRule"/>
</dbReference>
<dbReference type="HAMAP" id="MF_01891">
    <property type="entry name" value="FhlC"/>
    <property type="match status" value="1"/>
</dbReference>
<dbReference type="InterPro" id="IPR007944">
    <property type="entry name" value="FlhC"/>
</dbReference>
<dbReference type="NCBIfam" id="NF009365">
    <property type="entry name" value="PRK12722.1"/>
    <property type="match status" value="1"/>
</dbReference>
<dbReference type="Pfam" id="PF05280">
    <property type="entry name" value="FlhC"/>
    <property type="match status" value="1"/>
</dbReference>
<dbReference type="PIRSF" id="PIRSF003159">
    <property type="entry name" value="FlhC"/>
    <property type="match status" value="1"/>
</dbReference>
<dbReference type="SUPFAM" id="SSF160930">
    <property type="entry name" value="FlhC-like"/>
    <property type="match status" value="1"/>
</dbReference>
<reference key="1">
    <citation type="journal article" date="2010" name="PLoS ONE">
        <title>The complete multipartite genome sequence of Cupriavidus necator JMP134, a versatile pollutant degrader.</title>
        <authorList>
            <person name="Lykidis A."/>
            <person name="Perez-Pantoja D."/>
            <person name="Ledger T."/>
            <person name="Mavromatis K."/>
            <person name="Anderson I.J."/>
            <person name="Ivanova N.N."/>
            <person name="Hooper S.D."/>
            <person name="Lapidus A."/>
            <person name="Lucas S."/>
            <person name="Gonzalez B."/>
            <person name="Kyrpides N.C."/>
        </authorList>
    </citation>
    <scope>NUCLEOTIDE SEQUENCE [LARGE SCALE GENOMIC DNA]</scope>
    <source>
        <strain>JMP134 / LMG 1197</strain>
    </source>
</reference>